<feature type="chain" id="PRO_0000282979" description="Cardiac-enriched FHL2-interacting protein">
    <location>
        <begin position="1"/>
        <end position="1435"/>
    </location>
</feature>
<feature type="region of interest" description="Disordered" evidence="2">
    <location>
        <begin position="109"/>
        <end position="176"/>
    </location>
</feature>
<feature type="region of interest" description="Disordered" evidence="2">
    <location>
        <begin position="203"/>
        <end position="234"/>
    </location>
</feature>
<feature type="region of interest" description="Disordered" evidence="2">
    <location>
        <begin position="250"/>
        <end position="270"/>
    </location>
</feature>
<feature type="region of interest" description="Disordered" evidence="2">
    <location>
        <begin position="291"/>
        <end position="311"/>
    </location>
</feature>
<feature type="region of interest" description="Disordered" evidence="2">
    <location>
        <begin position="362"/>
        <end position="592"/>
    </location>
</feature>
<feature type="region of interest" description="Disordered" evidence="2">
    <location>
        <begin position="609"/>
        <end position="772"/>
    </location>
</feature>
<feature type="region of interest" description="Disordered" evidence="2">
    <location>
        <begin position="795"/>
        <end position="847"/>
    </location>
</feature>
<feature type="region of interest" description="Disordered" evidence="2">
    <location>
        <begin position="1007"/>
        <end position="1108"/>
    </location>
</feature>
<feature type="region of interest" description="Disordered" evidence="2">
    <location>
        <begin position="1138"/>
        <end position="1261"/>
    </location>
</feature>
<feature type="region of interest" description="Disordered" evidence="2">
    <location>
        <begin position="1363"/>
        <end position="1435"/>
    </location>
</feature>
<feature type="compositionally biased region" description="Polar residues" evidence="2">
    <location>
        <begin position="133"/>
        <end position="147"/>
    </location>
</feature>
<feature type="compositionally biased region" description="Basic and acidic residues" evidence="2">
    <location>
        <begin position="149"/>
        <end position="160"/>
    </location>
</feature>
<feature type="compositionally biased region" description="Basic and acidic residues" evidence="2">
    <location>
        <begin position="389"/>
        <end position="402"/>
    </location>
</feature>
<feature type="compositionally biased region" description="Basic and acidic residues" evidence="2">
    <location>
        <begin position="479"/>
        <end position="493"/>
    </location>
</feature>
<feature type="compositionally biased region" description="Basic and acidic residues" evidence="2">
    <location>
        <begin position="522"/>
        <end position="535"/>
    </location>
</feature>
<feature type="compositionally biased region" description="Basic and acidic residues" evidence="2">
    <location>
        <begin position="609"/>
        <end position="620"/>
    </location>
</feature>
<feature type="compositionally biased region" description="Basic and acidic residues" evidence="2">
    <location>
        <begin position="650"/>
        <end position="667"/>
    </location>
</feature>
<feature type="compositionally biased region" description="Polar residues" evidence="2">
    <location>
        <begin position="668"/>
        <end position="679"/>
    </location>
</feature>
<feature type="compositionally biased region" description="Low complexity" evidence="2">
    <location>
        <begin position="727"/>
        <end position="741"/>
    </location>
</feature>
<feature type="compositionally biased region" description="Basic and acidic residues" evidence="2">
    <location>
        <begin position="751"/>
        <end position="772"/>
    </location>
</feature>
<feature type="compositionally biased region" description="Polar residues" evidence="2">
    <location>
        <begin position="831"/>
        <end position="847"/>
    </location>
</feature>
<feature type="compositionally biased region" description="Low complexity" evidence="2">
    <location>
        <begin position="1055"/>
        <end position="1066"/>
    </location>
</feature>
<feature type="compositionally biased region" description="Polar residues" evidence="2">
    <location>
        <begin position="1067"/>
        <end position="1082"/>
    </location>
</feature>
<feature type="compositionally biased region" description="Low complexity" evidence="2">
    <location>
        <begin position="1083"/>
        <end position="1093"/>
    </location>
</feature>
<feature type="compositionally biased region" description="Polar residues" evidence="2">
    <location>
        <begin position="1094"/>
        <end position="1105"/>
    </location>
</feature>
<feature type="compositionally biased region" description="Basic residues" evidence="2">
    <location>
        <begin position="1182"/>
        <end position="1193"/>
    </location>
</feature>
<feature type="compositionally biased region" description="Basic and acidic residues" evidence="2">
    <location>
        <begin position="1194"/>
        <end position="1211"/>
    </location>
</feature>
<feature type="compositionally biased region" description="Acidic residues" evidence="2">
    <location>
        <begin position="1424"/>
        <end position="1435"/>
    </location>
</feature>
<feature type="modified residue" description="Phosphothreonine" evidence="10">
    <location>
        <position position="120"/>
    </location>
</feature>
<feature type="modified residue" description="Phosphoserine" evidence="10">
    <location>
        <position position="323"/>
    </location>
</feature>
<feature type="modified residue" description="Phosphoserine" evidence="10">
    <location>
        <position position="470"/>
    </location>
</feature>
<feature type="modified residue" description="Phosphoserine" evidence="10">
    <location>
        <position position="816"/>
    </location>
</feature>
<feature type="splice variant" id="VSP_024267" description="In isoform 3." evidence="6 7">
    <original>LNQKFFPGPLSPEEEDVFYSDSQSDFM</original>
    <variation>THTHTHTHTHDHQHILSLFRSIKSRRQ</variation>
    <location>
        <begin position="693"/>
        <end position="719"/>
    </location>
</feature>
<feature type="splice variant" id="VSP_024268" description="In isoform 3." evidence="6 7">
    <location>
        <begin position="720"/>
        <end position="1435"/>
    </location>
</feature>
<feature type="sequence variant" id="VAR_031441" description="In dbSNP:rs4838383." evidence="4">
    <original>N</original>
    <variation>K</variation>
    <location>
        <position position="208"/>
    </location>
</feature>
<feature type="sequence variant" id="VAR_061604" description="In dbSNP:rs56206226." evidence="3 4">
    <original>R</original>
    <variation>L</variation>
    <location>
        <position position="320"/>
    </location>
</feature>
<feature type="sequence variant" id="VAR_061605" description="In dbSNP:rs45554335." evidence="3 4">
    <original>D</original>
    <variation>A</variation>
    <location>
        <position position="461"/>
    </location>
</feature>
<feature type="sequence variant" id="VAR_061606" description="In dbSNP:rs61453891.">
    <original>V</original>
    <variation>G</variation>
    <location>
        <position position="522"/>
    </location>
</feature>
<feature type="sequence variant" id="VAR_031442" description="In dbSNP:rs10857469.">
    <original>H</original>
    <variation>Q</variation>
    <location>
        <position position="666"/>
    </location>
</feature>
<feature type="sequence variant" id="VAR_059608" description="In dbSNP:rs7921186." evidence="4">
    <original>F</original>
    <variation>S</variation>
    <location>
        <position position="698"/>
    </location>
</feature>
<feature type="sequence variant" id="VAR_059609" description="In dbSNP:rs11101093.">
    <original>D</original>
    <variation>G</variation>
    <location>
        <position position="741"/>
    </location>
</feature>
<feature type="sequence variant" id="VAR_059610" description="In dbSNP:rs12217617." evidence="4">
    <original>D</original>
    <variation>N</variation>
    <location>
        <position position="883"/>
    </location>
</feature>
<feature type="sequence variant" id="VAR_059611" description="In dbSNP:rs10857470.">
    <original>F</original>
    <variation>Y</variation>
    <location>
        <position position="958"/>
    </location>
</feature>
<feature type="sequence variant" id="VAR_059612" description="In dbSNP:rs11101094.">
    <original>G</original>
    <variation>A</variation>
    <location>
        <position position="1084"/>
    </location>
</feature>
<feature type="sequence variant" id="VAR_059613" description="In dbSNP:rs11101095.">
    <original>V</original>
    <variation>I</variation>
    <location>
        <position position="1254"/>
    </location>
</feature>
<feature type="sequence variant" id="VAR_059614" description="In dbSNP:rs10857472.">
    <original>G</original>
    <variation>S</variation>
    <location>
        <position position="1337"/>
    </location>
</feature>
<feature type="sequence conflict" description="In Ref. 2; AL833265 and 4; AAI26414." evidence="9" ref="2 4">
    <original>A</original>
    <variation>E</variation>
    <location>
        <position position="339"/>
    </location>
</feature>
<feature type="sequence conflict" description="In Ref. 2; AL833265." evidence="9" ref="2">
    <original>R</original>
    <variation>G</variation>
    <location>
        <position position="382"/>
    </location>
</feature>
<feature type="sequence conflict" description="In Ref. 2; AL833265." evidence="9" ref="2">
    <original>L</original>
    <variation>H</variation>
    <location>
        <position position="503"/>
    </location>
</feature>
<feature type="sequence conflict" description="In Ref. 1; AK127811." evidence="9" ref="1">
    <original>M</original>
    <variation>V</variation>
    <location>
        <position position="663"/>
    </location>
</feature>
<feature type="sequence conflict" description="In Ref. 5; CAC85340." evidence="9" ref="5">
    <original>PI</original>
    <variation>RL</variation>
    <location>
        <begin position="870"/>
        <end position="871"/>
    </location>
</feature>
<feature type="sequence conflict" description="In Ref. 2; AL833265." evidence="9" ref="2">
    <original>A</original>
    <variation>T</variation>
    <location>
        <position position="1269"/>
    </location>
</feature>
<feature type="sequence conflict" description="In Ref. 5; CAC85340." evidence="9" ref="5">
    <original>Q</original>
    <variation>H</variation>
    <location>
        <position position="1281"/>
    </location>
</feature>
<sequence length="1435" mass="156477">MMQGNKKCTDAFSDSSSIGSVLDDADREVSSLTDRAFRSLCISEDTSFHDSYLAVSPDITRQVFGTFHQRTVGHTQRKSGIWSQLPSQGTEHSGWAATFQQLPKYVQGEEKYPKTSPPPTPVQRRLEVPVSGLRSSNKPVSKVSTLIKSFDRTESQRCESRPTASKPPALKNPPKFAPLPENSVNFCFDSAFLTVRRVPAEVSNTHQNSYQPGRKHGEQESSKNPEMACHGSSSFLPAANDTATLCESKFPSPHHKPVTGEPGRGKGTFLHSENSAFESWNAHQPKLLERKDTAGTVPESKAPKHYGDTTLLREPCPPERTVSPCQVQASCSQEENRLAAGALSTSIPWGCRDPGAQVFAVEGKAPSSQPDSQEKPAQPPWRKPKTGKKGKESLQDTLEEKTQTNQRGPPLYTKHNPQEQFSENNALDLPVEPNEHYDPPFNISKLLTPIIPSKHALDSADSQPAERTPSPPGQLNGYQEKEPSECQSRDSYKSKAPSLLFNLKDVRKRVKSTYSSSPLLKVLDEKTRGKVDGKQEPVSNGVILPNGLEESPPNELSKERPADDPTASHINPQKDPTADPSEPSADSYLTLSTAPTIAKAPFYVNGEAAERSSYENKEVEGELEMGPAGSSWCPDSREHRPRKHLSLRLCNRDPEPGGATEKMKTHQLENGLSRSVSQETEPEREAGLQNTHLNQKFFPGPLSPEEEDVFYSDSQSDFMPSLKGKAKFSTSSSDQSFASFDDQQKMWFTENQREDRRKDVSAGDSQKDEKENVMRKDELQYCALSNGHACLENRSQGEALQRERESVSGGRTRKASAEEANFRGSWIGENKGTTFSQAKDLTPSPSSASNRHMLFTIKDNTLRATPVIKPIMLPLLRTMSLEDSLSSGHKEEELPRPEWGEDPGFCAPENQDILGTSTPTNTRGTRVKCMANEVMEDPGQGSSMARMEASQPAPKGNFPSMPLVGEGDRVKAPPDAAPGLVASNCKSGSADSGKLAAPWHIPTIALPEGDIEDQPPPWQPENCWEEQTPGFKSHFLSTPRAGPPGRRLVPSERANSPNPGSPGESSACSPAASNIWEESSQAPGGPELLPEEPNQASPWASSSPARVTRREDLTHALVWEGGSDPLLELSAEDLRTLSPRGSLLDVATSPAGTSGRLELPAQLERTASKPPAVPPKTEKALRRAKKLASKRRKTDQAQEKHGESQEGKPCPEDLEQTQQRPLCPRERPRHNFPVVRSLPPPVHRHSVSGFSEPVGRRPGGPQSLTPLPAYPATQKVLQDPQSGEYFVFDLPLQVKIKTFYDPETGKYVKVSIPSSEGASPEPPPPDALAAPYVLYPGFQPVPVTALMPLRCSSQLSAPTFLRQGPRASAARARTQSVHESGLQLDPGPHGDCTPHSAGQRPHGPPQSPGEEGVEAPGLGIISTDDLEDFATEGIS</sequence>
<name>CEFIP_HUMAN</name>
<organism>
    <name type="scientific">Homo sapiens</name>
    <name type="common">Human</name>
    <dbReference type="NCBI Taxonomy" id="9606"/>
    <lineage>
        <taxon>Eukaryota</taxon>
        <taxon>Metazoa</taxon>
        <taxon>Chordata</taxon>
        <taxon>Craniata</taxon>
        <taxon>Vertebrata</taxon>
        <taxon>Euteleostomi</taxon>
        <taxon>Mammalia</taxon>
        <taxon>Eutheria</taxon>
        <taxon>Euarchontoglires</taxon>
        <taxon>Primates</taxon>
        <taxon>Haplorrhini</taxon>
        <taxon>Catarrhini</taxon>
        <taxon>Hominidae</taxon>
        <taxon>Homo</taxon>
    </lineage>
</organism>
<reference key="1">
    <citation type="journal article" date="2004" name="Nat. Genet.">
        <title>Complete sequencing and characterization of 21,243 full-length human cDNAs.</title>
        <authorList>
            <person name="Ota T."/>
            <person name="Suzuki Y."/>
            <person name="Nishikawa T."/>
            <person name="Otsuki T."/>
            <person name="Sugiyama T."/>
            <person name="Irie R."/>
            <person name="Wakamatsu A."/>
            <person name="Hayashi K."/>
            <person name="Sato H."/>
            <person name="Nagai K."/>
            <person name="Kimura K."/>
            <person name="Makita H."/>
            <person name="Sekine M."/>
            <person name="Obayashi M."/>
            <person name="Nishi T."/>
            <person name="Shibahara T."/>
            <person name="Tanaka T."/>
            <person name="Ishii S."/>
            <person name="Yamamoto J."/>
            <person name="Saito K."/>
            <person name="Kawai Y."/>
            <person name="Isono Y."/>
            <person name="Nakamura Y."/>
            <person name="Nagahari K."/>
            <person name="Murakami K."/>
            <person name="Yasuda T."/>
            <person name="Iwayanagi T."/>
            <person name="Wagatsuma M."/>
            <person name="Shiratori A."/>
            <person name="Sudo H."/>
            <person name="Hosoiri T."/>
            <person name="Kaku Y."/>
            <person name="Kodaira H."/>
            <person name="Kondo H."/>
            <person name="Sugawara M."/>
            <person name="Takahashi M."/>
            <person name="Kanda K."/>
            <person name="Yokoi T."/>
            <person name="Furuya T."/>
            <person name="Kikkawa E."/>
            <person name="Omura Y."/>
            <person name="Abe K."/>
            <person name="Kamihara K."/>
            <person name="Katsuta N."/>
            <person name="Sato K."/>
            <person name="Tanikawa M."/>
            <person name="Yamazaki M."/>
            <person name="Ninomiya K."/>
            <person name="Ishibashi T."/>
            <person name="Yamashita H."/>
            <person name="Murakawa K."/>
            <person name="Fujimori K."/>
            <person name="Tanai H."/>
            <person name="Kimata M."/>
            <person name="Watanabe M."/>
            <person name="Hiraoka S."/>
            <person name="Chiba Y."/>
            <person name="Ishida S."/>
            <person name="Ono Y."/>
            <person name="Takiguchi S."/>
            <person name="Watanabe S."/>
            <person name="Yosida M."/>
            <person name="Hotuta T."/>
            <person name="Kusano J."/>
            <person name="Kanehori K."/>
            <person name="Takahashi-Fujii A."/>
            <person name="Hara H."/>
            <person name="Tanase T.-O."/>
            <person name="Nomura Y."/>
            <person name="Togiya S."/>
            <person name="Komai F."/>
            <person name="Hara R."/>
            <person name="Takeuchi K."/>
            <person name="Arita M."/>
            <person name="Imose N."/>
            <person name="Musashino K."/>
            <person name="Yuuki H."/>
            <person name="Oshima A."/>
            <person name="Sasaki N."/>
            <person name="Aotsuka S."/>
            <person name="Yoshikawa Y."/>
            <person name="Matsunawa H."/>
            <person name="Ichihara T."/>
            <person name="Shiohata N."/>
            <person name="Sano S."/>
            <person name="Moriya S."/>
            <person name="Momiyama H."/>
            <person name="Satoh N."/>
            <person name="Takami S."/>
            <person name="Terashima Y."/>
            <person name="Suzuki O."/>
            <person name="Nakagawa S."/>
            <person name="Senoh A."/>
            <person name="Mizoguchi H."/>
            <person name="Goto Y."/>
            <person name="Shimizu F."/>
            <person name="Wakebe H."/>
            <person name="Hishigaki H."/>
            <person name="Watanabe T."/>
            <person name="Sugiyama A."/>
            <person name="Takemoto M."/>
            <person name="Kawakami B."/>
            <person name="Yamazaki M."/>
            <person name="Watanabe K."/>
            <person name="Kumagai A."/>
            <person name="Itakura S."/>
            <person name="Fukuzumi Y."/>
            <person name="Fujimori Y."/>
            <person name="Komiyama M."/>
            <person name="Tashiro H."/>
            <person name="Tanigami A."/>
            <person name="Fujiwara T."/>
            <person name="Ono T."/>
            <person name="Yamada K."/>
            <person name="Fujii Y."/>
            <person name="Ozaki K."/>
            <person name="Hirao M."/>
            <person name="Ohmori Y."/>
            <person name="Kawabata A."/>
            <person name="Hikiji T."/>
            <person name="Kobatake N."/>
            <person name="Inagaki H."/>
            <person name="Ikema Y."/>
            <person name="Okamoto S."/>
            <person name="Okitani R."/>
            <person name="Kawakami T."/>
            <person name="Noguchi S."/>
            <person name="Itoh T."/>
            <person name="Shigeta K."/>
            <person name="Senba T."/>
            <person name="Matsumura K."/>
            <person name="Nakajima Y."/>
            <person name="Mizuno T."/>
            <person name="Morinaga M."/>
            <person name="Sasaki M."/>
            <person name="Togashi T."/>
            <person name="Oyama M."/>
            <person name="Hata H."/>
            <person name="Watanabe M."/>
            <person name="Komatsu T."/>
            <person name="Mizushima-Sugano J."/>
            <person name="Satoh T."/>
            <person name="Shirai Y."/>
            <person name="Takahashi Y."/>
            <person name="Nakagawa K."/>
            <person name="Okumura K."/>
            <person name="Nagase T."/>
            <person name="Nomura N."/>
            <person name="Kikuchi H."/>
            <person name="Masuho Y."/>
            <person name="Yamashita R."/>
            <person name="Nakai K."/>
            <person name="Yada T."/>
            <person name="Nakamura Y."/>
            <person name="Ohara O."/>
            <person name="Isogai T."/>
            <person name="Sugano S."/>
        </authorList>
    </citation>
    <scope>NUCLEOTIDE SEQUENCE [LARGE SCALE MRNA] (ISOFORM 3)</scope>
    <source>
        <tissue>Skeletal muscle</tissue>
    </source>
</reference>
<reference key="2">
    <citation type="journal article" date="2007" name="BMC Genomics">
        <title>The full-ORF clone resource of the German cDNA consortium.</title>
        <authorList>
            <person name="Bechtel S."/>
            <person name="Rosenfelder H."/>
            <person name="Duda A."/>
            <person name="Schmidt C.P."/>
            <person name="Ernst U."/>
            <person name="Wellenreuther R."/>
            <person name="Mehrle A."/>
            <person name="Schuster C."/>
            <person name="Bahr A."/>
            <person name="Bloecker H."/>
            <person name="Heubner D."/>
            <person name="Hoerlein A."/>
            <person name="Michel G."/>
            <person name="Wedler H."/>
            <person name="Koehrer K."/>
            <person name="Ottenwaelder B."/>
            <person name="Poustka A."/>
            <person name="Wiemann S."/>
            <person name="Schupp I."/>
        </authorList>
    </citation>
    <scope>NUCLEOTIDE SEQUENCE [LARGE SCALE MRNA] (ISOFORM 1)</scope>
    <scope>VARIANTS LYS-208; LEU-320; ALA-461; SER-698 AND ASN-883</scope>
</reference>
<reference key="3">
    <citation type="journal article" date="2004" name="Nature">
        <title>The DNA sequence and comparative analysis of human chromosome 10.</title>
        <authorList>
            <person name="Deloukas P."/>
            <person name="Earthrowl M.E."/>
            <person name="Grafham D.V."/>
            <person name="Rubenfield M."/>
            <person name="French L."/>
            <person name="Steward C.A."/>
            <person name="Sims S.K."/>
            <person name="Jones M.C."/>
            <person name="Searle S."/>
            <person name="Scott C."/>
            <person name="Howe K."/>
            <person name="Hunt S.E."/>
            <person name="Andrews T.D."/>
            <person name="Gilbert J.G.R."/>
            <person name="Swarbreck D."/>
            <person name="Ashurst J.L."/>
            <person name="Taylor A."/>
            <person name="Battles J."/>
            <person name="Bird C.P."/>
            <person name="Ainscough R."/>
            <person name="Almeida J.P."/>
            <person name="Ashwell R.I.S."/>
            <person name="Ambrose K.D."/>
            <person name="Babbage A.K."/>
            <person name="Bagguley C.L."/>
            <person name="Bailey J."/>
            <person name="Banerjee R."/>
            <person name="Bates K."/>
            <person name="Beasley H."/>
            <person name="Bray-Allen S."/>
            <person name="Brown A.J."/>
            <person name="Brown J.Y."/>
            <person name="Burford D.C."/>
            <person name="Burrill W."/>
            <person name="Burton J."/>
            <person name="Cahill P."/>
            <person name="Camire D."/>
            <person name="Carter N.P."/>
            <person name="Chapman J.C."/>
            <person name="Clark S.Y."/>
            <person name="Clarke G."/>
            <person name="Clee C.M."/>
            <person name="Clegg S."/>
            <person name="Corby N."/>
            <person name="Coulson A."/>
            <person name="Dhami P."/>
            <person name="Dutta I."/>
            <person name="Dunn M."/>
            <person name="Faulkner L."/>
            <person name="Frankish A."/>
            <person name="Frankland J.A."/>
            <person name="Garner P."/>
            <person name="Garnett J."/>
            <person name="Gribble S."/>
            <person name="Griffiths C."/>
            <person name="Grocock R."/>
            <person name="Gustafson E."/>
            <person name="Hammond S."/>
            <person name="Harley J.L."/>
            <person name="Hart E."/>
            <person name="Heath P.D."/>
            <person name="Ho T.P."/>
            <person name="Hopkins B."/>
            <person name="Horne J."/>
            <person name="Howden P.J."/>
            <person name="Huckle E."/>
            <person name="Hynds C."/>
            <person name="Johnson C."/>
            <person name="Johnson D."/>
            <person name="Kana A."/>
            <person name="Kay M."/>
            <person name="Kimberley A.M."/>
            <person name="Kershaw J.K."/>
            <person name="Kokkinaki M."/>
            <person name="Laird G.K."/>
            <person name="Lawlor S."/>
            <person name="Lee H.M."/>
            <person name="Leongamornlert D.A."/>
            <person name="Laird G."/>
            <person name="Lloyd C."/>
            <person name="Lloyd D.M."/>
            <person name="Loveland J."/>
            <person name="Lovell J."/>
            <person name="McLaren S."/>
            <person name="McLay K.E."/>
            <person name="McMurray A."/>
            <person name="Mashreghi-Mohammadi M."/>
            <person name="Matthews L."/>
            <person name="Milne S."/>
            <person name="Nickerson T."/>
            <person name="Nguyen M."/>
            <person name="Overton-Larty E."/>
            <person name="Palmer S.A."/>
            <person name="Pearce A.V."/>
            <person name="Peck A.I."/>
            <person name="Pelan S."/>
            <person name="Phillimore B."/>
            <person name="Porter K."/>
            <person name="Rice C.M."/>
            <person name="Rogosin A."/>
            <person name="Ross M.T."/>
            <person name="Sarafidou T."/>
            <person name="Sehra H.K."/>
            <person name="Shownkeen R."/>
            <person name="Skuce C.D."/>
            <person name="Smith M."/>
            <person name="Standring L."/>
            <person name="Sycamore N."/>
            <person name="Tester J."/>
            <person name="Thorpe A."/>
            <person name="Torcasso W."/>
            <person name="Tracey A."/>
            <person name="Tromans A."/>
            <person name="Tsolas J."/>
            <person name="Wall M."/>
            <person name="Walsh J."/>
            <person name="Wang H."/>
            <person name="Weinstock K."/>
            <person name="West A.P."/>
            <person name="Willey D.L."/>
            <person name="Whitehead S.L."/>
            <person name="Wilming L."/>
            <person name="Wray P.W."/>
            <person name="Young L."/>
            <person name="Chen Y."/>
            <person name="Lovering R.C."/>
            <person name="Moschonas N.K."/>
            <person name="Siebert R."/>
            <person name="Fechtel K."/>
            <person name="Bentley D."/>
            <person name="Durbin R.M."/>
            <person name="Hubbard T."/>
            <person name="Doucette-Stamm L."/>
            <person name="Beck S."/>
            <person name="Smith D.R."/>
            <person name="Rogers J."/>
        </authorList>
    </citation>
    <scope>NUCLEOTIDE SEQUENCE [LARGE SCALE GENOMIC DNA]</scope>
</reference>
<reference key="4">
    <citation type="journal article" date="2004" name="Genome Res.">
        <title>The status, quality, and expansion of the NIH full-length cDNA project: the Mammalian Gene Collection (MGC).</title>
        <authorList>
            <consortium name="The MGC Project Team"/>
        </authorList>
    </citation>
    <scope>NUCLEOTIDE SEQUENCE [LARGE SCALE MRNA] (ISOFORM 3)</scope>
    <scope>VARIANTS LEU-320 AND ALA-461</scope>
</reference>
<reference key="5">
    <citation type="submission" date="2001-05" db="EMBL/GenBank/DDBJ databases">
        <title>Full length sequencing of some human and murine muscular transcripts (Telethon Italy project B41).</title>
        <authorList>
            <person name="Ievolella C."/>
            <person name="Zara I."/>
            <person name="Millino C."/>
            <person name="Faulkner G."/>
            <person name="Lanfranchi G."/>
        </authorList>
    </citation>
    <scope>NUCLEOTIDE SEQUENCE [LARGE SCALE MRNA] OF 870-1435 (ISOFORM 1)</scope>
    <source>
        <tissue>Skeletal muscle</tissue>
    </source>
</reference>
<reference key="6">
    <citation type="journal article" date="2013" name="J. Proteome Res.">
        <title>Toward a comprehensive characterization of a human cancer cell phosphoproteome.</title>
        <authorList>
            <person name="Zhou H."/>
            <person name="Di Palma S."/>
            <person name="Preisinger C."/>
            <person name="Peng M."/>
            <person name="Polat A.N."/>
            <person name="Heck A.J."/>
            <person name="Mohammed S."/>
        </authorList>
    </citation>
    <scope>PHOSPHORYLATION [LARGE SCALE ANALYSIS] AT THR-120; SER-323; SER-470 AND SER-816</scope>
    <scope>IDENTIFICATION BY MASS SPECTROMETRY [LARGE SCALE ANALYSIS]</scope>
    <source>
        <tissue>Erythroleukemia</tissue>
    </source>
</reference>
<reference key="7">
    <citation type="journal article" date="2017" name="J. Biol. Chem.">
        <title>The novel cardiac z-disc protein CEFIP regulates cardiomyocyte hypertrophy by modulating calcineurin signaling.</title>
        <authorList>
            <person name="Dierck F."/>
            <person name="Kuhn C."/>
            <person name="Rohr C."/>
            <person name="Hille S."/>
            <person name="Braune J."/>
            <person name="Sossalla S."/>
            <person name="Molt S."/>
            <person name="van der Ven P.F.M."/>
            <person name="Fuerst D.O."/>
            <person name="Frey N."/>
        </authorList>
    </citation>
    <scope>TISSUE SPECIFICITY</scope>
    <scope>INTERACTION WITH FHL2</scope>
</reference>
<keyword id="KW-0025">Alternative splicing</keyword>
<keyword id="KW-0963">Cytoplasm</keyword>
<keyword id="KW-0597">Phosphoprotein</keyword>
<keyword id="KW-1267">Proteomics identification</keyword>
<keyword id="KW-1185">Reference proteome</keyword>
<comment type="function">
    <text evidence="1">Plays an important role in cardiomyocyte hypertrophy via activation of the calcineurin/NFAT signaling pathway.</text>
</comment>
<comment type="subunit">
    <text evidence="5">Interacts with FHL2.</text>
</comment>
<comment type="subcellular location">
    <subcellularLocation>
        <location evidence="1">Cytoplasm</location>
        <location evidence="1">Myofibril</location>
        <location evidence="1">Sarcomere</location>
        <location evidence="1">Z line</location>
    </subcellularLocation>
</comment>
<comment type="alternative products">
    <event type="alternative splicing"/>
    <isoform>
        <id>Q711Q0-1</id>
        <name>1</name>
        <sequence type="displayed"/>
    </isoform>
    <isoform>
        <id>Q711Q0-3</id>
        <name>3</name>
        <sequence type="described" ref="VSP_024267 VSP_024268"/>
    </isoform>
</comment>
<comment type="tissue specificity">
    <text evidence="5">Expressed in the heart and skeletal muscle.</text>
</comment>
<comment type="sequence caution" evidence="9">
    <conflict type="frameshift">
        <sequence resource="EMBL-CDS" id="CAC85340"/>
    </conflict>
</comment>
<protein>
    <recommendedName>
        <fullName evidence="8">Cardiac-enriched FHL2-interacting protein</fullName>
    </recommendedName>
</protein>
<evidence type="ECO:0000250" key="1">
    <source>
        <dbReference type="UniProtKB" id="M0RD54"/>
    </source>
</evidence>
<evidence type="ECO:0000256" key="2">
    <source>
        <dbReference type="SAM" id="MobiDB-lite"/>
    </source>
</evidence>
<evidence type="ECO:0000269" key="3">
    <source>
    </source>
</evidence>
<evidence type="ECO:0000269" key="4">
    <source>
    </source>
</evidence>
<evidence type="ECO:0000269" key="5">
    <source>
    </source>
</evidence>
<evidence type="ECO:0000303" key="6">
    <source>
    </source>
</evidence>
<evidence type="ECO:0000303" key="7">
    <source>
    </source>
</evidence>
<evidence type="ECO:0000303" key="8">
    <source>
    </source>
</evidence>
<evidence type="ECO:0000305" key="9"/>
<evidence type="ECO:0007744" key="10">
    <source>
    </source>
</evidence>
<proteinExistence type="evidence at protein level"/>
<accession>Q711Q0</accession>
<accession>A0AVL8</accession>
<dbReference type="EMBL" id="AK127811">
    <property type="status" value="NOT_ANNOTATED_CDS"/>
    <property type="molecule type" value="mRNA"/>
</dbReference>
<dbReference type="EMBL" id="AL833265">
    <property type="status" value="NOT_ANNOTATED_CDS"/>
    <property type="molecule type" value="mRNA"/>
</dbReference>
<dbReference type="EMBL" id="AC027674">
    <property type="status" value="NOT_ANNOTATED_CDS"/>
    <property type="molecule type" value="Genomic_DNA"/>
</dbReference>
<dbReference type="EMBL" id="BC126413">
    <property type="protein sequence ID" value="AAI26414.1"/>
    <property type="molecule type" value="mRNA"/>
</dbReference>
<dbReference type="EMBL" id="AJ311357">
    <property type="protein sequence ID" value="CAC85340.1"/>
    <property type="status" value="ALT_FRAME"/>
    <property type="molecule type" value="mRNA"/>
</dbReference>
<dbReference type="CCDS" id="CCDS44387.1">
    <molecule id="Q711Q0-1"/>
</dbReference>
<dbReference type="RefSeq" id="NP_001128668.1">
    <molecule id="Q711Q0-1"/>
    <property type="nucleotide sequence ID" value="NM_001135196.1"/>
</dbReference>
<dbReference type="RefSeq" id="XP_005269533.1">
    <molecule id="Q711Q0-1"/>
    <property type="nucleotide sequence ID" value="XM_005269476.4"/>
</dbReference>
<dbReference type="RefSeq" id="XP_005269534.1">
    <molecule id="Q711Q0-1"/>
    <property type="nucleotide sequence ID" value="XM_005269477.3"/>
</dbReference>
<dbReference type="RefSeq" id="XP_005269535.1">
    <molecule id="Q711Q0-1"/>
    <property type="nucleotide sequence ID" value="XM_005269478.4"/>
</dbReference>
<dbReference type="BioGRID" id="125609">
    <property type="interactions" value="12"/>
</dbReference>
<dbReference type="FunCoup" id="Q711Q0">
    <property type="interactions" value="9"/>
</dbReference>
<dbReference type="IntAct" id="Q711Q0">
    <property type="interactions" value="7"/>
</dbReference>
<dbReference type="STRING" id="9606.ENSP00000363259"/>
<dbReference type="GlyGen" id="Q711Q0">
    <property type="glycosylation" value="2 sites, 1 O-linked glycan (1 site)"/>
</dbReference>
<dbReference type="iPTMnet" id="Q711Q0"/>
<dbReference type="PhosphoSitePlus" id="Q711Q0"/>
<dbReference type="BioMuta" id="C10orf71"/>
<dbReference type="DMDM" id="143955302"/>
<dbReference type="jPOST" id="Q711Q0"/>
<dbReference type="MassIVE" id="Q711Q0"/>
<dbReference type="PaxDb" id="9606-ENSP00000363259"/>
<dbReference type="PeptideAtlas" id="Q711Q0"/>
<dbReference type="ProteomicsDB" id="68588">
    <molecule id="Q711Q0-1"/>
</dbReference>
<dbReference type="ProteomicsDB" id="68589">
    <molecule id="Q711Q0-3"/>
</dbReference>
<dbReference type="Pumba" id="Q711Q0"/>
<dbReference type="Antibodypedia" id="50031">
    <property type="antibodies" value="25 antibodies from 9 providers"/>
</dbReference>
<dbReference type="DNASU" id="118461"/>
<dbReference type="Ensembl" id="ENST00000374144.8">
    <molecule id="Q711Q0-1"/>
    <property type="protein sequence ID" value="ENSP00000363259.3"/>
    <property type="gene ID" value="ENSG00000177354.12"/>
</dbReference>
<dbReference type="GeneID" id="118461"/>
<dbReference type="KEGG" id="hsa:118461"/>
<dbReference type="MANE-Select" id="ENST00000374144.8">
    <property type="protein sequence ID" value="ENSP00000363259.3"/>
    <property type="RefSeq nucleotide sequence ID" value="NM_001135196.2"/>
    <property type="RefSeq protein sequence ID" value="NP_001128668.1"/>
</dbReference>
<dbReference type="UCSC" id="uc021pqa.3">
    <molecule id="Q711Q0-1"/>
    <property type="organism name" value="human"/>
</dbReference>
<dbReference type="AGR" id="HGNC:26973"/>
<dbReference type="CTD" id="118461"/>
<dbReference type="DisGeNET" id="118461"/>
<dbReference type="GeneCards" id="C10orf71"/>
<dbReference type="HGNC" id="HGNC:26973">
    <property type="gene designation" value="C10orf71"/>
</dbReference>
<dbReference type="HPA" id="ENSG00000177354">
    <property type="expression patterns" value="Group enriched (skeletal muscle, tongue)"/>
</dbReference>
<dbReference type="neXtProt" id="NX_Q711Q0"/>
<dbReference type="OpenTargets" id="ENSG00000177354"/>
<dbReference type="PharmGKB" id="PA134920715"/>
<dbReference type="VEuPathDB" id="HostDB:ENSG00000177354"/>
<dbReference type="eggNOG" id="ENOG502QVE3">
    <property type="taxonomic scope" value="Eukaryota"/>
</dbReference>
<dbReference type="GeneTree" id="ENSGT00730000111333"/>
<dbReference type="HOGENOM" id="CLU_255771_0_0_1"/>
<dbReference type="InParanoid" id="Q711Q0"/>
<dbReference type="OMA" id="HYSPPFN"/>
<dbReference type="OrthoDB" id="8945866at2759"/>
<dbReference type="PAN-GO" id="Q711Q0">
    <property type="GO annotations" value="2 GO annotations based on evolutionary models"/>
</dbReference>
<dbReference type="PhylomeDB" id="Q711Q0"/>
<dbReference type="TreeFam" id="TF336978"/>
<dbReference type="PathwayCommons" id="Q711Q0"/>
<dbReference type="SignaLink" id="Q711Q0"/>
<dbReference type="BioGRID-ORCS" id="118461">
    <property type="hits" value="17 hits in 1126 CRISPR screens"/>
</dbReference>
<dbReference type="ChiTaRS" id="C10orf71">
    <property type="organism name" value="human"/>
</dbReference>
<dbReference type="GenomeRNAi" id="118461"/>
<dbReference type="Pharos" id="Q711Q0">
    <property type="development level" value="Tdark"/>
</dbReference>
<dbReference type="PRO" id="PR:Q711Q0"/>
<dbReference type="Proteomes" id="UP000005640">
    <property type="component" value="Chromosome 10"/>
</dbReference>
<dbReference type="RNAct" id="Q711Q0">
    <property type="molecule type" value="protein"/>
</dbReference>
<dbReference type="Bgee" id="ENSG00000177354">
    <property type="expression patterns" value="Expressed in skeletal muscle tissue of rectus abdominis and 95 other cell types or tissues"/>
</dbReference>
<dbReference type="GO" id="GO:0030018">
    <property type="term" value="C:Z disc"/>
    <property type="evidence" value="ECO:0000250"/>
    <property type="project" value="UniProtKB"/>
</dbReference>
<dbReference type="GO" id="GO:0086003">
    <property type="term" value="P:cardiac muscle cell contraction"/>
    <property type="evidence" value="ECO:0007669"/>
    <property type="project" value="Ensembl"/>
</dbReference>
<dbReference type="GO" id="GO:0055007">
    <property type="term" value="P:cardiac muscle cell differentiation"/>
    <property type="evidence" value="ECO:0007669"/>
    <property type="project" value="Ensembl"/>
</dbReference>
<dbReference type="GO" id="GO:0003007">
    <property type="term" value="P:heart morphogenesis"/>
    <property type="evidence" value="ECO:0007669"/>
    <property type="project" value="Ensembl"/>
</dbReference>
<dbReference type="GO" id="GO:0070886">
    <property type="term" value="P:positive regulation of calcineurin-NFAT signaling cascade"/>
    <property type="evidence" value="ECO:0000250"/>
    <property type="project" value="UniProtKB"/>
</dbReference>
<dbReference type="InterPro" id="IPR052303">
    <property type="entry name" value="CEFIP"/>
</dbReference>
<dbReference type="InterPro" id="IPR027838">
    <property type="entry name" value="DUF4585"/>
</dbReference>
<dbReference type="PANTHER" id="PTHR33775:SF2">
    <property type="entry name" value="CARDIAC-ENRICHED FHL2-INTERACTING PROTEIN"/>
    <property type="match status" value="1"/>
</dbReference>
<dbReference type="PANTHER" id="PTHR33775">
    <property type="entry name" value="CARDIAC-ENRICHED FHL2-INTERACTING PROTEIN-RELATED"/>
    <property type="match status" value="1"/>
</dbReference>
<dbReference type="Pfam" id="PF15232">
    <property type="entry name" value="DUF4585"/>
    <property type="match status" value="1"/>
</dbReference>
<gene>
    <name evidence="8" type="primary">CEFIP</name>
    <name type="synonym">C10orf71</name>
</gene>